<keyword id="KW-0040">ANK repeat</keyword>
<keyword id="KW-1185">Reference proteome</keyword>
<keyword id="KW-0677">Repeat</keyword>
<proteinExistence type="predicted"/>
<organism>
    <name type="scientific">Acanthamoeba polyphaga mimivirus</name>
    <name type="common">APMV</name>
    <dbReference type="NCBI Taxonomy" id="212035"/>
    <lineage>
        <taxon>Viruses</taxon>
        <taxon>Varidnaviria</taxon>
        <taxon>Bamfordvirae</taxon>
        <taxon>Nucleocytoviricota</taxon>
        <taxon>Megaviricetes</taxon>
        <taxon>Imitervirales</taxon>
        <taxon>Mimiviridae</taxon>
        <taxon>Megamimivirinae</taxon>
        <taxon>Mimivirus</taxon>
        <taxon>Mimivirus bradfordmassiliense</taxon>
    </lineage>
</organism>
<sequence length="467" mass="52124">MYDTLPPELWVQIVDYSGEISLLLTNTSFFELFNLINIKTDIIEYVMENDLIDILKYLSLLKKLGHPIIVDKNILNIKTLNKYLIKNCGENQLEIVKFLVSLGADIRAGNDYAVGLSSQNGHLEVVKYLVNQGSDIRAENDYAVRWASGNGHLEVVKYLVSQGANIRADNDHAIGLASYYGYLEVVKYLVSQGADIRSDNDYAVRMASRNGHIEVVEYLVSQGANIRSDNDYAVRLASQNGHLEVVKYLVSQGADIKSDNDYAVRLASQNGHLEVVEYLVTQGTNIRVNNNYAVEWASKNGNLEVVKYLISQGADIIADNNFAVRWASRNGHLEVVKYLVSLGADIKSDNDYAVRWASGNGHLEVVKYLVSQGSDIRVENDYAVRWASRNGHFDVIKYLVSQGADIRSDNDYAVKWASENGHLEVVKFLVSLGADIKAEDDYAVRWASEKGHLEVVEYLVSQGAVLS</sequence>
<reference key="1">
    <citation type="journal article" date="2004" name="Science">
        <title>The 1.2-megabase genome sequence of Mimivirus.</title>
        <authorList>
            <person name="Raoult D."/>
            <person name="Audic S."/>
            <person name="Robert C."/>
            <person name="Abergel C."/>
            <person name="Renesto P."/>
            <person name="Ogata H."/>
            <person name="La Scola B."/>
            <person name="Susan M."/>
            <person name="Claverie J.-M."/>
        </authorList>
    </citation>
    <scope>NUCLEOTIDE SEQUENCE [LARGE SCALE GENOMIC DNA]</scope>
    <source>
        <strain>Rowbotham-Bradford</strain>
    </source>
</reference>
<gene>
    <name type="ordered locus">MIMI_R911</name>
</gene>
<name>YR911_MIMIV</name>
<organismHost>
    <name type="scientific">Acanthamoeba polyphaga</name>
    <name type="common">Amoeba</name>
    <dbReference type="NCBI Taxonomy" id="5757"/>
</organismHost>
<feature type="chain" id="PRO_0000067227" description="Putative ankyrin repeat protein R911">
    <location>
        <begin position="1"/>
        <end position="467"/>
    </location>
</feature>
<feature type="repeat" description="ANK 1">
    <location>
        <begin position="38"/>
        <end position="70"/>
    </location>
</feature>
<feature type="repeat" description="ANK 2">
    <location>
        <begin position="79"/>
        <end position="108"/>
    </location>
</feature>
<feature type="repeat" description="ANK 3">
    <location>
        <begin position="109"/>
        <end position="138"/>
    </location>
</feature>
<feature type="repeat" description="ANK 4">
    <location>
        <begin position="140"/>
        <end position="168"/>
    </location>
</feature>
<feature type="repeat" description="ANK 5">
    <location>
        <begin position="170"/>
        <end position="198"/>
    </location>
</feature>
<feature type="repeat" description="ANK 6">
    <location>
        <begin position="199"/>
        <end position="228"/>
    </location>
</feature>
<feature type="repeat" description="ANK 7">
    <location>
        <begin position="229"/>
        <end position="258"/>
    </location>
</feature>
<feature type="repeat" description="ANK 8">
    <location>
        <begin position="260"/>
        <end position="288"/>
    </location>
</feature>
<feature type="repeat" description="ANK 9">
    <location>
        <begin position="289"/>
        <end position="318"/>
    </location>
</feature>
<feature type="repeat" description="ANK 10">
    <location>
        <begin position="320"/>
        <end position="348"/>
    </location>
</feature>
<feature type="repeat" description="ANK 11">
    <location>
        <begin position="350"/>
        <end position="378"/>
    </location>
</feature>
<feature type="repeat" description="ANK 12">
    <location>
        <begin position="379"/>
        <end position="408"/>
    </location>
</feature>
<feature type="repeat" description="ANK 13">
    <location>
        <begin position="410"/>
        <end position="438"/>
    </location>
</feature>
<feature type="repeat" description="ANK 14">
    <location>
        <begin position="440"/>
        <end position="467"/>
    </location>
</feature>
<dbReference type="EMBL" id="AY653733">
    <property type="protein sequence ID" value="AAV51168.1"/>
    <property type="molecule type" value="Genomic_DNA"/>
</dbReference>
<dbReference type="SMR" id="Q5UR04"/>
<dbReference type="KEGG" id="vg:10021811"/>
<dbReference type="OrthoDB" id="38654at10239"/>
<dbReference type="Proteomes" id="UP000001134">
    <property type="component" value="Genome"/>
</dbReference>
<dbReference type="Gene3D" id="1.25.40.20">
    <property type="entry name" value="Ankyrin repeat-containing domain"/>
    <property type="match status" value="5"/>
</dbReference>
<dbReference type="InterPro" id="IPR002110">
    <property type="entry name" value="Ankyrin_rpt"/>
</dbReference>
<dbReference type="InterPro" id="IPR036770">
    <property type="entry name" value="Ankyrin_rpt-contain_sf"/>
</dbReference>
<dbReference type="PANTHER" id="PTHR44207:SF2">
    <property type="entry name" value="REPEAT PROTEIN, PUTATIVE-RELATED"/>
    <property type="match status" value="1"/>
</dbReference>
<dbReference type="PANTHER" id="PTHR44207">
    <property type="entry name" value="SURFACE ANTIGEN BSPA-LIKE-RELATED"/>
    <property type="match status" value="1"/>
</dbReference>
<dbReference type="Pfam" id="PF00023">
    <property type="entry name" value="Ank"/>
    <property type="match status" value="2"/>
</dbReference>
<dbReference type="Pfam" id="PF12796">
    <property type="entry name" value="Ank_2"/>
    <property type="match status" value="3"/>
</dbReference>
<dbReference type="SMART" id="SM00248">
    <property type="entry name" value="ANK"/>
    <property type="match status" value="13"/>
</dbReference>
<dbReference type="SUPFAM" id="SSF48403">
    <property type="entry name" value="Ankyrin repeat"/>
    <property type="match status" value="2"/>
</dbReference>
<dbReference type="PROSITE" id="PS50297">
    <property type="entry name" value="ANK_REP_REGION"/>
    <property type="match status" value="1"/>
</dbReference>
<dbReference type="PROSITE" id="PS50088">
    <property type="entry name" value="ANK_REPEAT"/>
    <property type="match status" value="12"/>
</dbReference>
<accession>Q5UR04</accession>
<protein>
    <recommendedName>
        <fullName>Putative ankyrin repeat protein R911</fullName>
    </recommendedName>
</protein>